<feature type="chain" id="PRO_1000053775" description="Uracil phosphoribosyltransferase">
    <location>
        <begin position="1"/>
        <end position="208"/>
    </location>
</feature>
<feature type="binding site" evidence="1">
    <location>
        <position position="78"/>
    </location>
    <ligand>
        <name>5-phospho-alpha-D-ribose 1-diphosphate</name>
        <dbReference type="ChEBI" id="CHEBI:58017"/>
    </ligand>
</feature>
<feature type="binding site" evidence="1">
    <location>
        <position position="103"/>
    </location>
    <ligand>
        <name>5-phospho-alpha-D-ribose 1-diphosphate</name>
        <dbReference type="ChEBI" id="CHEBI:58017"/>
    </ligand>
</feature>
<feature type="binding site" evidence="1">
    <location>
        <begin position="130"/>
        <end position="138"/>
    </location>
    <ligand>
        <name>5-phospho-alpha-D-ribose 1-diphosphate</name>
        <dbReference type="ChEBI" id="CHEBI:58017"/>
    </ligand>
</feature>
<feature type="binding site" evidence="1">
    <location>
        <position position="193"/>
    </location>
    <ligand>
        <name>uracil</name>
        <dbReference type="ChEBI" id="CHEBI:17568"/>
    </ligand>
</feature>
<feature type="binding site" evidence="1">
    <location>
        <begin position="198"/>
        <end position="200"/>
    </location>
    <ligand>
        <name>uracil</name>
        <dbReference type="ChEBI" id="CHEBI:17568"/>
    </ligand>
</feature>
<feature type="binding site" evidence="1">
    <location>
        <position position="199"/>
    </location>
    <ligand>
        <name>5-phospho-alpha-D-ribose 1-diphosphate</name>
        <dbReference type="ChEBI" id="CHEBI:58017"/>
    </ligand>
</feature>
<proteinExistence type="inferred from homology"/>
<comment type="function">
    <text evidence="1">Catalyzes the conversion of uracil and 5-phospho-alpha-D-ribose 1-diphosphate (PRPP) to UMP and diphosphate.</text>
</comment>
<comment type="catalytic activity">
    <reaction evidence="1">
        <text>UMP + diphosphate = 5-phospho-alpha-D-ribose 1-diphosphate + uracil</text>
        <dbReference type="Rhea" id="RHEA:13017"/>
        <dbReference type="ChEBI" id="CHEBI:17568"/>
        <dbReference type="ChEBI" id="CHEBI:33019"/>
        <dbReference type="ChEBI" id="CHEBI:57865"/>
        <dbReference type="ChEBI" id="CHEBI:58017"/>
        <dbReference type="EC" id="2.4.2.9"/>
    </reaction>
</comment>
<comment type="cofactor">
    <cofactor evidence="1">
        <name>Mg(2+)</name>
        <dbReference type="ChEBI" id="CHEBI:18420"/>
    </cofactor>
    <text evidence="1">Binds 1 Mg(2+) ion per subunit. The magnesium is bound as Mg-PRPP.</text>
</comment>
<comment type="activity regulation">
    <text evidence="1">Allosterically activated by GTP.</text>
</comment>
<comment type="pathway">
    <text evidence="1">Pyrimidine metabolism; UMP biosynthesis via salvage pathway; UMP from uracil: step 1/1.</text>
</comment>
<comment type="similarity">
    <text evidence="1">Belongs to the UPRTase family.</text>
</comment>
<evidence type="ECO:0000255" key="1">
    <source>
        <dbReference type="HAMAP-Rule" id="MF_01218"/>
    </source>
</evidence>
<dbReference type="EC" id="2.4.2.9" evidence="1"/>
<dbReference type="EMBL" id="CP000026">
    <property type="protein sequence ID" value="AAV76382.1"/>
    <property type="molecule type" value="Genomic_DNA"/>
</dbReference>
<dbReference type="RefSeq" id="WP_000706208.1">
    <property type="nucleotide sequence ID" value="NC_006511.1"/>
</dbReference>
<dbReference type="SMR" id="Q5PNJ7"/>
<dbReference type="KEGG" id="spt:SPA0369"/>
<dbReference type="HOGENOM" id="CLU_067096_2_2_6"/>
<dbReference type="UniPathway" id="UPA00574">
    <property type="reaction ID" value="UER00636"/>
</dbReference>
<dbReference type="Proteomes" id="UP000008185">
    <property type="component" value="Chromosome"/>
</dbReference>
<dbReference type="GO" id="GO:0005525">
    <property type="term" value="F:GTP binding"/>
    <property type="evidence" value="ECO:0007669"/>
    <property type="project" value="UniProtKB-KW"/>
</dbReference>
<dbReference type="GO" id="GO:0000287">
    <property type="term" value="F:magnesium ion binding"/>
    <property type="evidence" value="ECO:0007669"/>
    <property type="project" value="UniProtKB-UniRule"/>
</dbReference>
<dbReference type="GO" id="GO:0004845">
    <property type="term" value="F:uracil phosphoribosyltransferase activity"/>
    <property type="evidence" value="ECO:0007669"/>
    <property type="project" value="UniProtKB-UniRule"/>
</dbReference>
<dbReference type="GO" id="GO:0044206">
    <property type="term" value="P:UMP salvage"/>
    <property type="evidence" value="ECO:0007669"/>
    <property type="project" value="UniProtKB-UniRule"/>
</dbReference>
<dbReference type="GO" id="GO:0006223">
    <property type="term" value="P:uracil salvage"/>
    <property type="evidence" value="ECO:0007669"/>
    <property type="project" value="InterPro"/>
</dbReference>
<dbReference type="CDD" id="cd06223">
    <property type="entry name" value="PRTases_typeI"/>
    <property type="match status" value="1"/>
</dbReference>
<dbReference type="FunFam" id="3.40.50.2020:FF:000003">
    <property type="entry name" value="Uracil phosphoribosyltransferase"/>
    <property type="match status" value="1"/>
</dbReference>
<dbReference type="Gene3D" id="3.40.50.2020">
    <property type="match status" value="1"/>
</dbReference>
<dbReference type="HAMAP" id="MF_01218_B">
    <property type="entry name" value="Upp_B"/>
    <property type="match status" value="1"/>
</dbReference>
<dbReference type="InterPro" id="IPR000836">
    <property type="entry name" value="PRibTrfase_dom"/>
</dbReference>
<dbReference type="InterPro" id="IPR029057">
    <property type="entry name" value="PRTase-like"/>
</dbReference>
<dbReference type="InterPro" id="IPR034332">
    <property type="entry name" value="Upp_B"/>
</dbReference>
<dbReference type="InterPro" id="IPR050054">
    <property type="entry name" value="UPRTase/APRTase"/>
</dbReference>
<dbReference type="InterPro" id="IPR005765">
    <property type="entry name" value="Ura_phspho_trans"/>
</dbReference>
<dbReference type="NCBIfam" id="NF001097">
    <property type="entry name" value="PRK00129.1"/>
    <property type="match status" value="1"/>
</dbReference>
<dbReference type="NCBIfam" id="TIGR01091">
    <property type="entry name" value="upp"/>
    <property type="match status" value="1"/>
</dbReference>
<dbReference type="PANTHER" id="PTHR32315">
    <property type="entry name" value="ADENINE PHOSPHORIBOSYLTRANSFERASE"/>
    <property type="match status" value="1"/>
</dbReference>
<dbReference type="PANTHER" id="PTHR32315:SF4">
    <property type="entry name" value="URACIL PHOSPHORIBOSYLTRANSFERASE, CHLOROPLASTIC"/>
    <property type="match status" value="1"/>
</dbReference>
<dbReference type="Pfam" id="PF14681">
    <property type="entry name" value="UPRTase"/>
    <property type="match status" value="1"/>
</dbReference>
<dbReference type="SUPFAM" id="SSF53271">
    <property type="entry name" value="PRTase-like"/>
    <property type="match status" value="1"/>
</dbReference>
<name>UPP_SALPA</name>
<organism>
    <name type="scientific">Salmonella paratyphi A (strain ATCC 9150 / SARB42)</name>
    <dbReference type="NCBI Taxonomy" id="295319"/>
    <lineage>
        <taxon>Bacteria</taxon>
        <taxon>Pseudomonadati</taxon>
        <taxon>Pseudomonadota</taxon>
        <taxon>Gammaproteobacteria</taxon>
        <taxon>Enterobacterales</taxon>
        <taxon>Enterobacteriaceae</taxon>
        <taxon>Salmonella</taxon>
    </lineage>
</organism>
<keyword id="KW-0021">Allosteric enzyme</keyword>
<keyword id="KW-0328">Glycosyltransferase</keyword>
<keyword id="KW-0342">GTP-binding</keyword>
<keyword id="KW-0460">Magnesium</keyword>
<keyword id="KW-0547">Nucleotide-binding</keyword>
<keyword id="KW-0808">Transferase</keyword>
<accession>Q5PNJ7</accession>
<protein>
    <recommendedName>
        <fullName evidence="1">Uracil phosphoribosyltransferase</fullName>
        <ecNumber evidence="1">2.4.2.9</ecNumber>
    </recommendedName>
    <alternativeName>
        <fullName evidence="1">UMP pyrophosphorylase</fullName>
    </alternativeName>
    <alternativeName>
        <fullName evidence="1">UPRTase</fullName>
    </alternativeName>
</protein>
<reference key="1">
    <citation type="journal article" date="2004" name="Nat. Genet.">
        <title>Comparison of genome degradation in Paratyphi A and Typhi, human-restricted serovars of Salmonella enterica that cause typhoid.</title>
        <authorList>
            <person name="McClelland M."/>
            <person name="Sanderson K.E."/>
            <person name="Clifton S.W."/>
            <person name="Latreille P."/>
            <person name="Porwollik S."/>
            <person name="Sabo A."/>
            <person name="Meyer R."/>
            <person name="Bieri T."/>
            <person name="Ozersky P."/>
            <person name="McLellan M."/>
            <person name="Harkins C.R."/>
            <person name="Wang C."/>
            <person name="Nguyen C."/>
            <person name="Berghoff A."/>
            <person name="Elliott G."/>
            <person name="Kohlberg S."/>
            <person name="Strong C."/>
            <person name="Du F."/>
            <person name="Carter J."/>
            <person name="Kremizki C."/>
            <person name="Layman D."/>
            <person name="Leonard S."/>
            <person name="Sun H."/>
            <person name="Fulton L."/>
            <person name="Nash W."/>
            <person name="Miner T."/>
            <person name="Minx P."/>
            <person name="Delehaunty K."/>
            <person name="Fronick C."/>
            <person name="Magrini V."/>
            <person name="Nhan M."/>
            <person name="Warren W."/>
            <person name="Florea L."/>
            <person name="Spieth J."/>
            <person name="Wilson R.K."/>
        </authorList>
    </citation>
    <scope>NUCLEOTIDE SEQUENCE [LARGE SCALE GENOMIC DNA]</scope>
    <source>
        <strain>ATCC 9150 / SARB42</strain>
    </source>
</reference>
<gene>
    <name evidence="1" type="primary">upp</name>
    <name type="ordered locus">SPA0369</name>
</gene>
<sequence length="208" mass="22533">MKIVEVKHPLVKHKLGLMRENDISTKRFRELASEVGSLLTYEATADLETEKVTIEGWNGPVEIDQIKGKKITVVPILRAGLGMMEGVLENVPSARISVVGMYRNEETLEPVPYFQKLVSNIDERMALIVDPMLATGGSVIATIDLLKKAGCSSIKVLVLVAAPEGIAALEKAHPDVELYTASIDQGLNEHGYIIPGLGDAGDKIFGTK</sequence>